<comment type="function">
    <text>Involved in oxygen transport from the lung to the various peripheral tissues.</text>
</comment>
<comment type="subunit">
    <text>Heterotetramer of two alpha chains and two beta chains.</text>
</comment>
<comment type="tissue specificity">
    <text>Red blood cells.</text>
</comment>
<comment type="polymorphism">
    <text evidence="6">Inbred mouse strains possess 1 of 3 alleles at the HBB locus: D (diffuse), S (single), and P. The D and P alleles are actually closely linked doublets that coordinately express a major and a minor chain, the minor chain being slightly different in the two alleles. The S allele produces only 1 chain, it is characteristic of North American wild mice.</text>
</comment>
<comment type="miscellaneous">
    <text>The D-minor sequence is shown. See also the entry for the beta D-major chain and the S allele.</text>
</comment>
<comment type="similarity">
    <text evidence="4">Belongs to the globin family.</text>
</comment>
<keyword id="KW-0002">3D-structure</keyword>
<keyword id="KW-0007">Acetylation</keyword>
<keyword id="KW-0349">Heme</keyword>
<keyword id="KW-0408">Iron</keyword>
<keyword id="KW-0479">Metal-binding</keyword>
<keyword id="KW-0488">Methylation</keyword>
<keyword id="KW-0561">Oxygen transport</keyword>
<keyword id="KW-0597">Phosphoprotein</keyword>
<keyword id="KW-1185">Reference proteome</keyword>
<keyword id="KW-0813">Transport</keyword>
<gene>
    <name type="primary">Hbb-b2</name>
</gene>
<organism>
    <name type="scientific">Mus musculus</name>
    <name type="common">Mouse</name>
    <dbReference type="NCBI Taxonomy" id="10090"/>
    <lineage>
        <taxon>Eukaryota</taxon>
        <taxon>Metazoa</taxon>
        <taxon>Chordata</taxon>
        <taxon>Craniata</taxon>
        <taxon>Vertebrata</taxon>
        <taxon>Euteleostomi</taxon>
        <taxon>Mammalia</taxon>
        <taxon>Eutheria</taxon>
        <taxon>Euarchontoglires</taxon>
        <taxon>Glires</taxon>
        <taxon>Rodentia</taxon>
        <taxon>Myomorpha</taxon>
        <taxon>Muroidea</taxon>
        <taxon>Muridae</taxon>
        <taxon>Murinae</taxon>
        <taxon>Mus</taxon>
        <taxon>Mus</taxon>
    </lineage>
</organism>
<dbReference type="EMBL" id="V00722">
    <property type="protein sequence ID" value="CAA24101.1"/>
    <property type="molecule type" value="Genomic_DNA"/>
</dbReference>
<dbReference type="EMBL" id="X14061">
    <property type="protein sequence ID" value="CAA32225.1"/>
    <property type="status" value="ALT_SEQ"/>
    <property type="molecule type" value="Genomic_DNA"/>
</dbReference>
<dbReference type="EMBL" id="BC027434">
    <property type="protein sequence ID" value="AAH27434.1"/>
    <property type="molecule type" value="mRNA"/>
</dbReference>
<dbReference type="EMBL" id="BC032264">
    <property type="protein sequence ID" value="AAH32264.1"/>
    <property type="molecule type" value="mRNA"/>
</dbReference>
<dbReference type="PIR" id="B90790">
    <property type="entry name" value="HBMSN1"/>
</dbReference>
<dbReference type="RefSeq" id="NP_058652.1">
    <property type="nucleotide sequence ID" value="NM_016956.3"/>
</dbReference>
<dbReference type="PDB" id="1FNE">
    <property type="method" value="X-ray"/>
    <property type="resolution" value="1.90 A"/>
    <property type="chains" value="B/D=65-77"/>
</dbReference>
<dbReference type="PDB" id="1FNG">
    <property type="method" value="X-ray"/>
    <property type="resolution" value="1.90 A"/>
    <property type="chains" value="B/D=65-77"/>
</dbReference>
<dbReference type="PDB" id="1I3R">
    <property type="method" value="X-ray"/>
    <property type="resolution" value="2.40 A"/>
    <property type="chains" value="B/D/F/H=65-77"/>
</dbReference>
<dbReference type="PDBsum" id="1FNE"/>
<dbReference type="PDBsum" id="1FNG"/>
<dbReference type="PDBsum" id="1I3R"/>
<dbReference type="SMR" id="P02089"/>
<dbReference type="BioGRID" id="200220">
    <property type="interactions" value="4"/>
</dbReference>
<dbReference type="ComplexPortal" id="CPX-2924">
    <property type="entry name" value="Hemoglobin HbA complex, variant HBB2"/>
</dbReference>
<dbReference type="FunCoup" id="P02089">
    <property type="interactions" value="148"/>
</dbReference>
<dbReference type="IntAct" id="P02089">
    <property type="interactions" value="8"/>
</dbReference>
<dbReference type="MINT" id="P02089"/>
<dbReference type="ChEMBL" id="CHEMBL4007"/>
<dbReference type="CarbonylDB" id="P02089"/>
<dbReference type="iPTMnet" id="P02089"/>
<dbReference type="PhosphoSitePlus" id="P02089"/>
<dbReference type="SwissPalm" id="P02089"/>
<dbReference type="CPTAC" id="non-CPTAC-4038"/>
<dbReference type="jPOST" id="P02089"/>
<dbReference type="PeptideAtlas" id="P02089"/>
<dbReference type="ProteomicsDB" id="270896"/>
<dbReference type="DNASU" id="15130"/>
<dbReference type="GeneID" id="15130"/>
<dbReference type="KEGG" id="mmu:15130"/>
<dbReference type="UCSC" id="uc009iup.1">
    <property type="organism name" value="mouse"/>
</dbReference>
<dbReference type="AGR" id="MGI:96022"/>
<dbReference type="CTD" id="15130"/>
<dbReference type="MGI" id="MGI:96022">
    <property type="gene designation" value="Hbb-b2"/>
</dbReference>
<dbReference type="InParanoid" id="P02089"/>
<dbReference type="BioGRID-ORCS" id="15130">
    <property type="hits" value="0 hits in 17 CRISPR screens"/>
</dbReference>
<dbReference type="EvolutionaryTrace" id="P02089"/>
<dbReference type="PRO" id="PR:P02089"/>
<dbReference type="Proteomes" id="UP000000589">
    <property type="component" value="Unplaced"/>
</dbReference>
<dbReference type="RNAct" id="P02089">
    <property type="molecule type" value="protein"/>
</dbReference>
<dbReference type="GO" id="GO:0005833">
    <property type="term" value="C:hemoglobin complex"/>
    <property type="evidence" value="ECO:0000315"/>
    <property type="project" value="MGI"/>
</dbReference>
<dbReference type="GO" id="GO:0020037">
    <property type="term" value="F:heme binding"/>
    <property type="evidence" value="ECO:0007669"/>
    <property type="project" value="InterPro"/>
</dbReference>
<dbReference type="GO" id="GO:0046872">
    <property type="term" value="F:metal ion binding"/>
    <property type="evidence" value="ECO:0007669"/>
    <property type="project" value="UniProtKB-KW"/>
</dbReference>
<dbReference type="GO" id="GO:0019825">
    <property type="term" value="F:oxygen binding"/>
    <property type="evidence" value="ECO:0000315"/>
    <property type="project" value="MGI"/>
</dbReference>
<dbReference type="GO" id="GO:0005344">
    <property type="term" value="F:oxygen carrier activity"/>
    <property type="evidence" value="ECO:0007669"/>
    <property type="project" value="UniProtKB-KW"/>
</dbReference>
<dbReference type="GO" id="GO:0015670">
    <property type="term" value="P:carbon dioxide transport"/>
    <property type="evidence" value="ECO:0000303"/>
    <property type="project" value="ComplexPortal"/>
</dbReference>
<dbReference type="GO" id="GO:0048821">
    <property type="term" value="P:erythrocyte development"/>
    <property type="evidence" value="ECO:0000316"/>
    <property type="project" value="MGI"/>
</dbReference>
<dbReference type="GO" id="GO:0030099">
    <property type="term" value="P:myeloid cell differentiation"/>
    <property type="evidence" value="ECO:0000315"/>
    <property type="project" value="MGI"/>
</dbReference>
<dbReference type="GO" id="GO:0030185">
    <property type="term" value="P:nitric oxide transport"/>
    <property type="evidence" value="ECO:0000266"/>
    <property type="project" value="ComplexPortal"/>
</dbReference>
<dbReference type="GO" id="GO:0015671">
    <property type="term" value="P:oxygen transport"/>
    <property type="evidence" value="ECO:0000266"/>
    <property type="project" value="ComplexPortal"/>
</dbReference>
<dbReference type="GO" id="GO:0045639">
    <property type="term" value="P:positive regulation of myeloid cell differentiation"/>
    <property type="evidence" value="ECO:0000315"/>
    <property type="project" value="MGI"/>
</dbReference>
<dbReference type="GO" id="GO:0045646">
    <property type="term" value="P:regulation of erythrocyte differentiation"/>
    <property type="evidence" value="ECO:0000315"/>
    <property type="project" value="MGI"/>
</dbReference>
<dbReference type="CDD" id="cd08925">
    <property type="entry name" value="Hb-beta-like"/>
    <property type="match status" value="1"/>
</dbReference>
<dbReference type="FunFam" id="1.10.490.10:FF:000001">
    <property type="entry name" value="Hemoglobin subunit beta"/>
    <property type="match status" value="1"/>
</dbReference>
<dbReference type="Gene3D" id="1.10.490.10">
    <property type="entry name" value="Globins"/>
    <property type="match status" value="1"/>
</dbReference>
<dbReference type="InterPro" id="IPR000971">
    <property type="entry name" value="Globin"/>
</dbReference>
<dbReference type="InterPro" id="IPR009050">
    <property type="entry name" value="Globin-like_sf"/>
</dbReference>
<dbReference type="InterPro" id="IPR012292">
    <property type="entry name" value="Globin/Proto"/>
</dbReference>
<dbReference type="InterPro" id="IPR002337">
    <property type="entry name" value="Hemoglobin_b"/>
</dbReference>
<dbReference type="InterPro" id="IPR050056">
    <property type="entry name" value="Hemoglobin_oxygen_transport"/>
</dbReference>
<dbReference type="PANTHER" id="PTHR11442">
    <property type="entry name" value="HEMOGLOBIN FAMILY MEMBER"/>
    <property type="match status" value="1"/>
</dbReference>
<dbReference type="PANTHER" id="PTHR11442:SF42">
    <property type="entry name" value="HEMOGLOBIN SUBUNIT BETA"/>
    <property type="match status" value="1"/>
</dbReference>
<dbReference type="Pfam" id="PF00042">
    <property type="entry name" value="Globin"/>
    <property type="match status" value="1"/>
</dbReference>
<dbReference type="PRINTS" id="PR00814">
    <property type="entry name" value="BETAHAEM"/>
</dbReference>
<dbReference type="SUPFAM" id="SSF46458">
    <property type="entry name" value="Globin-like"/>
    <property type="match status" value="1"/>
</dbReference>
<dbReference type="PROSITE" id="PS01033">
    <property type="entry name" value="GLOBIN"/>
    <property type="match status" value="1"/>
</dbReference>
<protein>
    <recommendedName>
        <fullName>Hemoglobin subunit beta-2</fullName>
    </recommendedName>
    <alternativeName>
        <fullName>Beta-2-globin</fullName>
    </alternativeName>
    <alternativeName>
        <fullName>Hemoglobin beta-2 chain</fullName>
    </alternativeName>
    <alternativeName>
        <fullName>Hemoglobin beta-minor chain</fullName>
    </alternativeName>
</protein>
<sequence length="147" mass="15878">MVHLTDAEKSAVSCLWAKVNPDEVGGEALGRLLVVYPWTQRYFDSFGDLSSASAIMGNPKVKAHGKKVITAFNEGLKNLDNLKGTFASLSELHCDKLHVDPENFRLLGNAIVIVLGHHLGKDFTPAAQAAFQKVVAGVATALAHKYH</sequence>
<name>HBB2_MOUSE</name>
<accession>P02089</accession>
<accession>Q5D0E8</accession>
<reference key="1">
    <citation type="journal article" date="1989" name="J. Mol. Biol.">
        <title>Nucleotide sequence of the BALB/c mouse beta-globin complex.</title>
        <authorList>
            <person name="Shehee W.R."/>
            <person name="Loeb D.D."/>
            <person name="Adey N.B."/>
            <person name="Burton F.H."/>
            <person name="Casavant N.C."/>
            <person name="Cole P."/>
            <person name="Davies C.J."/>
            <person name="McGraw R.A."/>
            <person name="Schichman S.A."/>
            <person name="Severynse D.M."/>
            <person name="Voliva C.F."/>
            <person name="Weyter F.W."/>
            <person name="Wisely G.B."/>
            <person name="Edgell M.H."/>
            <person name="Hutchison C.A. III"/>
        </authorList>
    </citation>
    <scope>NUCLEOTIDE SEQUENCE</scope>
</reference>
<reference key="2">
    <citation type="journal article" date="1979" name="Cell">
        <title>The evolution and sequence comparison of two recently diverged mouse chromosomal beta-globin genes.</title>
        <authorList>
            <person name="Konkel D.A."/>
            <person name="Maizel J.V. Jr."/>
            <person name="Leder P."/>
        </authorList>
    </citation>
    <scope>NUCLEOTIDE SEQUENCE [GENOMIC DNA]</scope>
    <source>
        <strain>BALB/cJ</strain>
    </source>
</reference>
<reference key="3">
    <citation type="journal article" date="2004" name="Genome Res.">
        <title>The status, quality, and expansion of the NIH full-length cDNA project: the Mammalian Gene Collection (MGC).</title>
        <authorList>
            <consortium name="The MGC Project Team"/>
        </authorList>
    </citation>
    <scope>NUCLEOTIDE SEQUENCE [LARGE SCALE MRNA]</scope>
    <scope>23-GLU-VAL-24 DELINS ALA-ILE</scope>
    <source>
        <strain>Czech II</strain>
        <strain>FVB/N</strain>
        <tissue>Mammary gland</tissue>
        <tissue>Salivary gland</tissue>
    </source>
</reference>
<reference key="4">
    <citation type="journal article" date="1976" name="Biochem. J.">
        <title>Mouse haemoglobin beta chains. Comparative sequence data on adult major and minor beta chains from two species, Mus musculus and Mus cervicolor.</title>
        <authorList>
            <person name="Gilman J.G."/>
        </authorList>
    </citation>
    <scope>POLYMORPHISM</scope>
    <scope>VARIANT 23-GLU-VAL-24 DELINS ALA-ILE</scope>
</reference>
<reference key="5">
    <citation type="journal article" date="2010" name="Cell">
        <title>A tissue-specific atlas of mouse protein phosphorylation and expression.</title>
        <authorList>
            <person name="Huttlin E.L."/>
            <person name="Jedrychowski M.P."/>
            <person name="Elias J.E."/>
            <person name="Goswami T."/>
            <person name="Rad R."/>
            <person name="Beausoleil S.A."/>
            <person name="Villen J."/>
            <person name="Haas W."/>
            <person name="Sowa M.E."/>
            <person name="Gygi S.P."/>
        </authorList>
    </citation>
    <scope>PHOSPHORYLATION [LARGE SCALE ANALYSIS] AT TYR-42; SER-45 AND SER-53</scope>
    <scope>IDENTIFICATION BY MASS SPECTROMETRY [LARGE SCALE ANALYSIS]</scope>
    <source>
        <tissue>Brain</tissue>
        <tissue>Brown adipose tissue</tissue>
        <tissue>Heart</tissue>
        <tissue>Kidney</tissue>
        <tissue>Liver</tissue>
        <tissue>Lung</tissue>
        <tissue>Pancreas</tissue>
        <tissue>Spleen</tissue>
        <tissue>Testis</tissue>
    </source>
</reference>
<reference key="6">
    <citation type="journal article" date="2013" name="Mol. Cell">
        <title>SIRT5-mediated lysine desuccinylation impacts diverse metabolic pathways.</title>
        <authorList>
            <person name="Park J."/>
            <person name="Chen Y."/>
            <person name="Tishkoff D.X."/>
            <person name="Peng C."/>
            <person name="Tan M."/>
            <person name="Dai L."/>
            <person name="Xie Z."/>
            <person name="Zhang Y."/>
            <person name="Zwaans B.M."/>
            <person name="Skinner M.E."/>
            <person name="Lombard D.B."/>
            <person name="Zhao Y."/>
        </authorList>
    </citation>
    <scope>SUCCINYLATION [LARGE SCALE ANALYSIS] AT LYS-18 AND LYS-60</scope>
    <scope>IDENTIFICATION BY MASS SPECTROMETRY [LARGE SCALE ANALYSIS]</scope>
    <source>
        <tissue>Liver</tissue>
    </source>
</reference>
<reference key="7">
    <citation type="journal article" date="2014" name="Mol. Cell. Proteomics">
        <title>Immunoaffinity enrichment and mass spectrometry analysis of protein methylation.</title>
        <authorList>
            <person name="Guo A."/>
            <person name="Gu H."/>
            <person name="Zhou J."/>
            <person name="Mulhern D."/>
            <person name="Wang Y."/>
            <person name="Lee K.A."/>
            <person name="Yang V."/>
            <person name="Aguiar M."/>
            <person name="Kornhauser J."/>
            <person name="Jia X."/>
            <person name="Ren J."/>
            <person name="Beausoleil S.A."/>
            <person name="Silva J.C."/>
            <person name="Vemulapalli V."/>
            <person name="Bedford M.T."/>
            <person name="Comb M.J."/>
        </authorList>
    </citation>
    <scope>METHYLATION [LARGE SCALE ANALYSIS] AT ARG-105</scope>
    <scope>IDENTIFICATION BY MASS SPECTROMETRY [LARGE SCALE ANALYSIS]</scope>
    <source>
        <tissue>Brain</tissue>
        <tissue>Embryo</tissue>
    </source>
</reference>
<proteinExistence type="evidence at protein level"/>
<evidence type="ECO:0000250" key="1">
    <source>
        <dbReference type="UniProtKB" id="P02086"/>
    </source>
</evidence>
<evidence type="ECO:0000250" key="2">
    <source>
        <dbReference type="UniProtKB" id="P02091"/>
    </source>
</evidence>
<evidence type="ECO:0000250" key="3">
    <source>
        <dbReference type="UniProtKB" id="P11517"/>
    </source>
</evidence>
<evidence type="ECO:0000255" key="4">
    <source>
        <dbReference type="PROSITE-ProRule" id="PRU00238"/>
    </source>
</evidence>
<evidence type="ECO:0000269" key="5">
    <source>
    </source>
</evidence>
<evidence type="ECO:0000269" key="6">
    <source>
    </source>
</evidence>
<evidence type="ECO:0007744" key="7">
    <source>
    </source>
</evidence>
<evidence type="ECO:0007744" key="8">
    <source>
    </source>
</evidence>
<evidence type="ECO:0007744" key="9">
    <source>
    </source>
</evidence>
<feature type="initiator methionine" description="Removed" evidence="1">
    <location>
        <position position="1"/>
    </location>
</feature>
<feature type="chain" id="PRO_0000053025" description="Hemoglobin subunit beta-2">
    <location>
        <begin position="2"/>
        <end position="147"/>
    </location>
</feature>
<feature type="domain" description="Globin" evidence="4">
    <location>
        <begin position="3"/>
        <end position="147"/>
    </location>
</feature>
<feature type="binding site" description="distal binding residue">
    <location>
        <position position="64"/>
    </location>
    <ligand>
        <name>heme b</name>
        <dbReference type="ChEBI" id="CHEBI:60344"/>
    </ligand>
    <ligandPart>
        <name>Fe</name>
        <dbReference type="ChEBI" id="CHEBI:18248"/>
    </ligandPart>
</feature>
<feature type="binding site" description="proximal binding residue">
    <location>
        <position position="93"/>
    </location>
    <ligand>
        <name>heme b</name>
        <dbReference type="ChEBI" id="CHEBI:60344"/>
    </ligand>
    <ligandPart>
        <name>Fe</name>
        <dbReference type="ChEBI" id="CHEBI:18248"/>
    </ligandPart>
</feature>
<feature type="modified residue" description="N-acetylvaline" evidence="1">
    <location>
        <position position="2"/>
    </location>
</feature>
<feature type="modified residue" description="N6-succinyllysine" evidence="8">
    <location>
        <position position="18"/>
    </location>
</feature>
<feature type="modified residue" description="Phosphotyrosine" evidence="7">
    <location>
        <position position="42"/>
    </location>
</feature>
<feature type="modified residue" description="Phosphoserine" evidence="7">
    <location>
        <position position="45"/>
    </location>
</feature>
<feature type="modified residue" description="Phosphoserine" evidence="2">
    <location>
        <position position="51"/>
    </location>
</feature>
<feature type="modified residue" description="Phosphoserine" evidence="7">
    <location>
        <position position="53"/>
    </location>
</feature>
<feature type="modified residue" description="N6-succinyllysine" evidence="8">
    <location>
        <position position="60"/>
    </location>
</feature>
<feature type="modified residue" description="Asymmetric dimethylarginine" evidence="9">
    <location>
        <position position="105"/>
    </location>
</feature>
<feature type="modified residue" description="Phosphothreonine" evidence="3">
    <location>
        <position position="124"/>
    </location>
</feature>
<feature type="sequence variant" description="In allele P." evidence="5 6">
    <original>EV</original>
    <variation>AI</variation>
    <location>
        <begin position="23"/>
        <end position="24"/>
    </location>
</feature>